<gene>
    <name evidence="1" type="primary">trpB</name>
    <name type="ordered locus">KPK_3182</name>
</gene>
<feature type="chain" id="PRO_1000095793" description="Tryptophan synthase beta chain">
    <location>
        <begin position="1"/>
        <end position="397"/>
    </location>
</feature>
<feature type="modified residue" description="N6-(pyridoxal phosphate)lysine" evidence="1">
    <location>
        <position position="87"/>
    </location>
</feature>
<name>TRPB_KLEP3</name>
<evidence type="ECO:0000255" key="1">
    <source>
        <dbReference type="HAMAP-Rule" id="MF_00133"/>
    </source>
</evidence>
<protein>
    <recommendedName>
        <fullName evidence="1">Tryptophan synthase beta chain</fullName>
        <ecNumber evidence="1">4.2.1.20</ecNumber>
    </recommendedName>
</protein>
<proteinExistence type="inferred from homology"/>
<accession>B5XT02</accession>
<sequence>MSTLLNPYFGEFGGMYVPQILMPALRQLEEAFVSAQKDPAFQAEFTDLLKNYAGRPTALTKCRNLTEGTRTTLYLKREDLLHGGAHKTNQVLGQALLAKRMGKTEIIAETGAGQHGVASALASALLGLKCRIYMGAKDVERQSPNVFRMRLMGAEVIPVHSGSATLKDACNEALRDWSGSYEKAHYMLGTAAGPHPFPTIVREFQRMIGEETKAQILEKEGRLPDAVIACVGGGSNAIGMFADFIDETNVGLIGVEPAGHGIESGEHGAPLKHGRVGIYFGMKSPMMQTADGQIEESYSISAGLDFPSVGPQHAFLNSTGRADYVSITDDEALDAFKALSRHEGIIPALESSHALAHALKMMRENPEKEQLLVVNLSGRGDKDIFTVHDILKARGEI</sequence>
<dbReference type="EC" id="4.2.1.20" evidence="1"/>
<dbReference type="EMBL" id="CP000964">
    <property type="protein sequence ID" value="ACI11226.1"/>
    <property type="molecule type" value="Genomic_DNA"/>
</dbReference>
<dbReference type="SMR" id="B5XT02"/>
<dbReference type="KEGG" id="kpe:KPK_3182"/>
<dbReference type="HOGENOM" id="CLU_016734_3_1_6"/>
<dbReference type="UniPathway" id="UPA00035">
    <property type="reaction ID" value="UER00044"/>
</dbReference>
<dbReference type="Proteomes" id="UP000001734">
    <property type="component" value="Chromosome"/>
</dbReference>
<dbReference type="GO" id="GO:0005737">
    <property type="term" value="C:cytoplasm"/>
    <property type="evidence" value="ECO:0007669"/>
    <property type="project" value="TreeGrafter"/>
</dbReference>
<dbReference type="GO" id="GO:0004834">
    <property type="term" value="F:tryptophan synthase activity"/>
    <property type="evidence" value="ECO:0007669"/>
    <property type="project" value="UniProtKB-UniRule"/>
</dbReference>
<dbReference type="CDD" id="cd06446">
    <property type="entry name" value="Trp-synth_B"/>
    <property type="match status" value="1"/>
</dbReference>
<dbReference type="FunFam" id="3.40.50.1100:FF:000001">
    <property type="entry name" value="Tryptophan synthase beta chain"/>
    <property type="match status" value="1"/>
</dbReference>
<dbReference type="FunFam" id="3.40.50.1100:FF:000004">
    <property type="entry name" value="Tryptophan synthase beta chain"/>
    <property type="match status" value="1"/>
</dbReference>
<dbReference type="Gene3D" id="3.40.50.1100">
    <property type="match status" value="2"/>
</dbReference>
<dbReference type="HAMAP" id="MF_00133">
    <property type="entry name" value="Trp_synth_beta"/>
    <property type="match status" value="1"/>
</dbReference>
<dbReference type="InterPro" id="IPR006653">
    <property type="entry name" value="Trp_synth_b_CS"/>
</dbReference>
<dbReference type="InterPro" id="IPR006654">
    <property type="entry name" value="Trp_synth_beta"/>
</dbReference>
<dbReference type="InterPro" id="IPR023026">
    <property type="entry name" value="Trp_synth_beta/beta-like"/>
</dbReference>
<dbReference type="InterPro" id="IPR001926">
    <property type="entry name" value="TrpB-like_PALP"/>
</dbReference>
<dbReference type="InterPro" id="IPR036052">
    <property type="entry name" value="TrpB-like_PALP_sf"/>
</dbReference>
<dbReference type="NCBIfam" id="TIGR00263">
    <property type="entry name" value="trpB"/>
    <property type="match status" value="1"/>
</dbReference>
<dbReference type="PANTHER" id="PTHR48077:SF3">
    <property type="entry name" value="TRYPTOPHAN SYNTHASE"/>
    <property type="match status" value="1"/>
</dbReference>
<dbReference type="PANTHER" id="PTHR48077">
    <property type="entry name" value="TRYPTOPHAN SYNTHASE-RELATED"/>
    <property type="match status" value="1"/>
</dbReference>
<dbReference type="Pfam" id="PF00291">
    <property type="entry name" value="PALP"/>
    <property type="match status" value="1"/>
</dbReference>
<dbReference type="PIRSF" id="PIRSF001413">
    <property type="entry name" value="Trp_syn_beta"/>
    <property type="match status" value="1"/>
</dbReference>
<dbReference type="SUPFAM" id="SSF53686">
    <property type="entry name" value="Tryptophan synthase beta subunit-like PLP-dependent enzymes"/>
    <property type="match status" value="1"/>
</dbReference>
<dbReference type="PROSITE" id="PS00168">
    <property type="entry name" value="TRP_SYNTHASE_BETA"/>
    <property type="match status" value="1"/>
</dbReference>
<comment type="function">
    <text evidence="1">The beta subunit is responsible for the synthesis of L-tryptophan from indole and L-serine.</text>
</comment>
<comment type="catalytic activity">
    <reaction evidence="1">
        <text>(1S,2R)-1-C-(indol-3-yl)glycerol 3-phosphate + L-serine = D-glyceraldehyde 3-phosphate + L-tryptophan + H2O</text>
        <dbReference type="Rhea" id="RHEA:10532"/>
        <dbReference type="ChEBI" id="CHEBI:15377"/>
        <dbReference type="ChEBI" id="CHEBI:33384"/>
        <dbReference type="ChEBI" id="CHEBI:57912"/>
        <dbReference type="ChEBI" id="CHEBI:58866"/>
        <dbReference type="ChEBI" id="CHEBI:59776"/>
        <dbReference type="EC" id="4.2.1.20"/>
    </reaction>
</comment>
<comment type="cofactor">
    <cofactor evidence="1">
        <name>pyridoxal 5'-phosphate</name>
        <dbReference type="ChEBI" id="CHEBI:597326"/>
    </cofactor>
</comment>
<comment type="pathway">
    <text evidence="1">Amino-acid biosynthesis; L-tryptophan biosynthesis; L-tryptophan from chorismate: step 5/5.</text>
</comment>
<comment type="subunit">
    <text evidence="1">Tetramer of two alpha and two beta chains.</text>
</comment>
<comment type="similarity">
    <text evidence="1">Belongs to the TrpB family.</text>
</comment>
<keyword id="KW-0028">Amino-acid biosynthesis</keyword>
<keyword id="KW-0057">Aromatic amino acid biosynthesis</keyword>
<keyword id="KW-0456">Lyase</keyword>
<keyword id="KW-0663">Pyridoxal phosphate</keyword>
<keyword id="KW-0822">Tryptophan biosynthesis</keyword>
<organism>
    <name type="scientific">Klebsiella pneumoniae (strain 342)</name>
    <dbReference type="NCBI Taxonomy" id="507522"/>
    <lineage>
        <taxon>Bacteria</taxon>
        <taxon>Pseudomonadati</taxon>
        <taxon>Pseudomonadota</taxon>
        <taxon>Gammaproteobacteria</taxon>
        <taxon>Enterobacterales</taxon>
        <taxon>Enterobacteriaceae</taxon>
        <taxon>Klebsiella/Raoultella group</taxon>
        <taxon>Klebsiella</taxon>
        <taxon>Klebsiella pneumoniae complex</taxon>
    </lineage>
</organism>
<reference key="1">
    <citation type="journal article" date="2008" name="PLoS Genet.">
        <title>Complete genome sequence of the N2-fixing broad host range endophyte Klebsiella pneumoniae 342 and virulence predictions verified in mice.</title>
        <authorList>
            <person name="Fouts D.E."/>
            <person name="Tyler H.L."/>
            <person name="DeBoy R.T."/>
            <person name="Daugherty S."/>
            <person name="Ren Q."/>
            <person name="Badger J.H."/>
            <person name="Durkin A.S."/>
            <person name="Huot H."/>
            <person name="Shrivastava S."/>
            <person name="Kothari S."/>
            <person name="Dodson R.J."/>
            <person name="Mohamoud Y."/>
            <person name="Khouri H."/>
            <person name="Roesch L.F.W."/>
            <person name="Krogfelt K.A."/>
            <person name="Struve C."/>
            <person name="Triplett E.W."/>
            <person name="Methe B.A."/>
        </authorList>
    </citation>
    <scope>NUCLEOTIDE SEQUENCE [LARGE SCALE GENOMIC DNA]</scope>
    <source>
        <strain>342</strain>
    </source>
</reference>